<organism>
    <name type="scientific">Sulfurimonas denitrificans (strain ATCC 33889 / DSM 1251)</name>
    <name type="common">Thiomicrospira denitrificans (strain ATCC 33889 / DSM 1251)</name>
    <dbReference type="NCBI Taxonomy" id="326298"/>
    <lineage>
        <taxon>Bacteria</taxon>
        <taxon>Pseudomonadati</taxon>
        <taxon>Campylobacterota</taxon>
        <taxon>Epsilonproteobacteria</taxon>
        <taxon>Campylobacterales</taxon>
        <taxon>Sulfurimonadaceae</taxon>
        <taxon>Sulfurimonas</taxon>
    </lineage>
</organism>
<accession>Q30S57</accession>
<name>PDXJ_SULDN</name>
<feature type="chain" id="PRO_0000231853" description="Pyridoxine 5'-phosphate synthase">
    <location>
        <begin position="1"/>
        <end position="260"/>
    </location>
</feature>
<feature type="active site" description="Proton acceptor" evidence="1">
    <location>
        <position position="42"/>
    </location>
</feature>
<feature type="active site" description="Proton acceptor" evidence="1">
    <location>
        <position position="69"/>
    </location>
</feature>
<feature type="active site" description="Proton donor" evidence="1">
    <location>
        <position position="213"/>
    </location>
</feature>
<feature type="binding site" evidence="1">
    <location>
        <position position="6"/>
    </location>
    <ligand>
        <name>3-amino-2-oxopropyl phosphate</name>
        <dbReference type="ChEBI" id="CHEBI:57279"/>
    </ligand>
</feature>
<feature type="binding site" evidence="1">
    <location>
        <begin position="8"/>
        <end position="9"/>
    </location>
    <ligand>
        <name>1-deoxy-D-xylulose 5-phosphate</name>
        <dbReference type="ChEBI" id="CHEBI:57792"/>
    </ligand>
</feature>
<feature type="binding site" evidence="1">
    <location>
        <position position="17"/>
    </location>
    <ligand>
        <name>3-amino-2-oxopropyl phosphate</name>
        <dbReference type="ChEBI" id="CHEBI:57279"/>
    </ligand>
</feature>
<feature type="binding site" evidence="1">
    <location>
        <position position="44"/>
    </location>
    <ligand>
        <name>1-deoxy-D-xylulose 5-phosphate</name>
        <dbReference type="ChEBI" id="CHEBI:57792"/>
    </ligand>
</feature>
<feature type="binding site" evidence="1">
    <location>
        <position position="49"/>
    </location>
    <ligand>
        <name>1-deoxy-D-xylulose 5-phosphate</name>
        <dbReference type="ChEBI" id="CHEBI:57792"/>
    </ligand>
</feature>
<feature type="binding site" evidence="1">
    <location>
        <position position="99"/>
    </location>
    <ligand>
        <name>1-deoxy-D-xylulose 5-phosphate</name>
        <dbReference type="ChEBI" id="CHEBI:57792"/>
    </ligand>
</feature>
<feature type="binding site" evidence="1">
    <location>
        <position position="214"/>
    </location>
    <ligand>
        <name>3-amino-2-oxopropyl phosphate</name>
        <dbReference type="ChEBI" id="CHEBI:57279"/>
    </ligand>
</feature>
<feature type="binding site" evidence="1">
    <location>
        <begin position="235"/>
        <end position="236"/>
    </location>
    <ligand>
        <name>3-amino-2-oxopropyl phosphate</name>
        <dbReference type="ChEBI" id="CHEBI:57279"/>
    </ligand>
</feature>
<feature type="site" description="Transition state stabilizer" evidence="1">
    <location>
        <position position="150"/>
    </location>
</feature>
<keyword id="KW-0963">Cytoplasm</keyword>
<keyword id="KW-0664">Pyridoxine biosynthesis</keyword>
<keyword id="KW-1185">Reference proteome</keyword>
<keyword id="KW-0808">Transferase</keyword>
<sequence>MKLGVNIDHVAVLREARKVNDPDILNALYVATQNGADQITIHLREDRRHIQDADAYAIMKYSNVGVNLECSINRAILDIVTDLKPHRTTLVPEKREEVTTEGGLDVVGHEDEIAYAIELLHDYLIPVSLFIDPTIEAVEKSKELGAEMVELHTGAFANLYAMLSSSLPHSNHSIKELELPRHELSIRLEKSILAIDEAAKHAKKIGLEVAAGHGLNYHNVHEMMKIAEITELNIGQSIVARSIFSGLGEAVKEMKRLTSR</sequence>
<comment type="function">
    <text evidence="1">Catalyzes the complicated ring closure reaction between the two acyclic compounds 1-deoxy-D-xylulose-5-phosphate (DXP) and 3-amino-2-oxopropyl phosphate (1-amino-acetone-3-phosphate or AAP) to form pyridoxine 5'-phosphate (PNP) and inorganic phosphate.</text>
</comment>
<comment type="catalytic activity">
    <reaction evidence="1">
        <text>3-amino-2-oxopropyl phosphate + 1-deoxy-D-xylulose 5-phosphate = pyridoxine 5'-phosphate + phosphate + 2 H2O + H(+)</text>
        <dbReference type="Rhea" id="RHEA:15265"/>
        <dbReference type="ChEBI" id="CHEBI:15377"/>
        <dbReference type="ChEBI" id="CHEBI:15378"/>
        <dbReference type="ChEBI" id="CHEBI:43474"/>
        <dbReference type="ChEBI" id="CHEBI:57279"/>
        <dbReference type="ChEBI" id="CHEBI:57792"/>
        <dbReference type="ChEBI" id="CHEBI:58589"/>
        <dbReference type="EC" id="2.6.99.2"/>
    </reaction>
</comment>
<comment type="pathway">
    <text evidence="1">Cofactor biosynthesis; pyridoxine 5'-phosphate biosynthesis; pyridoxine 5'-phosphate from D-erythrose 4-phosphate: step 5/5.</text>
</comment>
<comment type="subunit">
    <text evidence="1">Homooctamer; tetramer of dimers.</text>
</comment>
<comment type="subcellular location">
    <subcellularLocation>
        <location evidence="1">Cytoplasm</location>
    </subcellularLocation>
</comment>
<comment type="similarity">
    <text evidence="1">Belongs to the PNP synthase family.</text>
</comment>
<reference key="1">
    <citation type="journal article" date="2008" name="Appl. Environ. Microbiol.">
        <title>Genome of the epsilonproteobacterial chemolithoautotroph Sulfurimonas denitrificans.</title>
        <authorList>
            <person name="Sievert S.M."/>
            <person name="Scott K.M."/>
            <person name="Klotz M.G."/>
            <person name="Chain P.S.G."/>
            <person name="Hauser L.J."/>
            <person name="Hemp J."/>
            <person name="Huegler M."/>
            <person name="Land M."/>
            <person name="Lapidus A."/>
            <person name="Larimer F.W."/>
            <person name="Lucas S."/>
            <person name="Malfatti S.A."/>
            <person name="Meyer F."/>
            <person name="Paulsen I.T."/>
            <person name="Ren Q."/>
            <person name="Simon J."/>
            <person name="Bailey K."/>
            <person name="Diaz E."/>
            <person name="Fitzpatrick K.A."/>
            <person name="Glover B."/>
            <person name="Gwatney N."/>
            <person name="Korajkic A."/>
            <person name="Long A."/>
            <person name="Mobberley J.M."/>
            <person name="Pantry S.N."/>
            <person name="Pazder G."/>
            <person name="Peterson S."/>
            <person name="Quintanilla J.D."/>
            <person name="Sprinkle R."/>
            <person name="Stephens J."/>
            <person name="Thomas P."/>
            <person name="Vaughn R."/>
            <person name="Weber M.J."/>
            <person name="Wooten L.L."/>
        </authorList>
    </citation>
    <scope>NUCLEOTIDE SEQUENCE [LARGE SCALE GENOMIC DNA]</scope>
    <source>
        <strain>ATCC 33889 / DSM 1251</strain>
    </source>
</reference>
<dbReference type="EC" id="2.6.99.2" evidence="1"/>
<dbReference type="EMBL" id="CP000153">
    <property type="protein sequence ID" value="ABB44174.1"/>
    <property type="molecule type" value="Genomic_DNA"/>
</dbReference>
<dbReference type="RefSeq" id="WP_011372526.1">
    <property type="nucleotide sequence ID" value="NC_007575.1"/>
</dbReference>
<dbReference type="SMR" id="Q30S57"/>
<dbReference type="STRING" id="326298.Suden_0896"/>
<dbReference type="KEGG" id="tdn:Suden_0896"/>
<dbReference type="eggNOG" id="COG0854">
    <property type="taxonomic scope" value="Bacteria"/>
</dbReference>
<dbReference type="HOGENOM" id="CLU_074563_0_0_7"/>
<dbReference type="UniPathway" id="UPA00244">
    <property type="reaction ID" value="UER00313"/>
</dbReference>
<dbReference type="Proteomes" id="UP000002714">
    <property type="component" value="Chromosome"/>
</dbReference>
<dbReference type="GO" id="GO:0005829">
    <property type="term" value="C:cytosol"/>
    <property type="evidence" value="ECO:0007669"/>
    <property type="project" value="TreeGrafter"/>
</dbReference>
<dbReference type="GO" id="GO:0033856">
    <property type="term" value="F:pyridoxine 5'-phosphate synthase activity"/>
    <property type="evidence" value="ECO:0007669"/>
    <property type="project" value="UniProtKB-EC"/>
</dbReference>
<dbReference type="GO" id="GO:0008615">
    <property type="term" value="P:pyridoxine biosynthetic process"/>
    <property type="evidence" value="ECO:0007669"/>
    <property type="project" value="UniProtKB-UniRule"/>
</dbReference>
<dbReference type="CDD" id="cd00003">
    <property type="entry name" value="PNPsynthase"/>
    <property type="match status" value="1"/>
</dbReference>
<dbReference type="Gene3D" id="3.20.20.70">
    <property type="entry name" value="Aldolase class I"/>
    <property type="match status" value="1"/>
</dbReference>
<dbReference type="HAMAP" id="MF_00279">
    <property type="entry name" value="PdxJ"/>
    <property type="match status" value="1"/>
</dbReference>
<dbReference type="InterPro" id="IPR013785">
    <property type="entry name" value="Aldolase_TIM"/>
</dbReference>
<dbReference type="InterPro" id="IPR004569">
    <property type="entry name" value="PyrdxlP_synth_PdxJ"/>
</dbReference>
<dbReference type="InterPro" id="IPR036130">
    <property type="entry name" value="Pyridoxine-5'_phos_synth"/>
</dbReference>
<dbReference type="NCBIfam" id="TIGR00559">
    <property type="entry name" value="pdxJ"/>
    <property type="match status" value="1"/>
</dbReference>
<dbReference type="NCBIfam" id="NF003625">
    <property type="entry name" value="PRK05265.1-3"/>
    <property type="match status" value="1"/>
</dbReference>
<dbReference type="NCBIfam" id="NF003627">
    <property type="entry name" value="PRK05265.1-5"/>
    <property type="match status" value="1"/>
</dbReference>
<dbReference type="PANTHER" id="PTHR30456">
    <property type="entry name" value="PYRIDOXINE 5'-PHOSPHATE SYNTHASE"/>
    <property type="match status" value="1"/>
</dbReference>
<dbReference type="PANTHER" id="PTHR30456:SF0">
    <property type="entry name" value="PYRIDOXINE 5'-PHOSPHATE SYNTHASE"/>
    <property type="match status" value="1"/>
</dbReference>
<dbReference type="Pfam" id="PF03740">
    <property type="entry name" value="PdxJ"/>
    <property type="match status" value="1"/>
</dbReference>
<dbReference type="SUPFAM" id="SSF63892">
    <property type="entry name" value="Pyridoxine 5'-phosphate synthase"/>
    <property type="match status" value="1"/>
</dbReference>
<evidence type="ECO:0000255" key="1">
    <source>
        <dbReference type="HAMAP-Rule" id="MF_00279"/>
    </source>
</evidence>
<protein>
    <recommendedName>
        <fullName evidence="1">Pyridoxine 5'-phosphate synthase</fullName>
        <shortName evidence="1">PNP synthase</shortName>
        <ecNumber evidence="1">2.6.99.2</ecNumber>
    </recommendedName>
</protein>
<gene>
    <name evidence="1" type="primary">pdxJ</name>
    <name type="ordered locus">Suden_0896</name>
</gene>
<proteinExistence type="inferred from homology"/>